<accession>Q6D117</accession>
<proteinExistence type="inferred from homology"/>
<comment type="function">
    <text evidence="1">Pyrophosphatase that catalyzes the hydrolysis of nucleoside triphosphates to their monophosphate derivatives, with a high preference for the non-canonical purine nucleotides XTP (xanthosine triphosphate), dITP (deoxyinosine triphosphate) and ITP. Seems to function as a house-cleaning enzyme that removes non-canonical purine nucleotides from the nucleotide pool, thus preventing their incorporation into DNA/RNA and avoiding chromosomal lesions.</text>
</comment>
<comment type="catalytic activity">
    <reaction evidence="1">
        <text>XTP + H2O = XMP + diphosphate + H(+)</text>
        <dbReference type="Rhea" id="RHEA:28610"/>
        <dbReference type="ChEBI" id="CHEBI:15377"/>
        <dbReference type="ChEBI" id="CHEBI:15378"/>
        <dbReference type="ChEBI" id="CHEBI:33019"/>
        <dbReference type="ChEBI" id="CHEBI:57464"/>
        <dbReference type="ChEBI" id="CHEBI:61314"/>
        <dbReference type="EC" id="3.6.1.66"/>
    </reaction>
</comment>
<comment type="catalytic activity">
    <reaction evidence="1">
        <text>dITP + H2O = dIMP + diphosphate + H(+)</text>
        <dbReference type="Rhea" id="RHEA:28342"/>
        <dbReference type="ChEBI" id="CHEBI:15377"/>
        <dbReference type="ChEBI" id="CHEBI:15378"/>
        <dbReference type="ChEBI" id="CHEBI:33019"/>
        <dbReference type="ChEBI" id="CHEBI:61194"/>
        <dbReference type="ChEBI" id="CHEBI:61382"/>
        <dbReference type="EC" id="3.6.1.66"/>
    </reaction>
</comment>
<comment type="catalytic activity">
    <reaction evidence="1">
        <text>ITP + H2O = IMP + diphosphate + H(+)</text>
        <dbReference type="Rhea" id="RHEA:29399"/>
        <dbReference type="ChEBI" id="CHEBI:15377"/>
        <dbReference type="ChEBI" id="CHEBI:15378"/>
        <dbReference type="ChEBI" id="CHEBI:33019"/>
        <dbReference type="ChEBI" id="CHEBI:58053"/>
        <dbReference type="ChEBI" id="CHEBI:61402"/>
        <dbReference type="EC" id="3.6.1.66"/>
    </reaction>
</comment>
<comment type="cofactor">
    <cofactor evidence="1">
        <name>Mg(2+)</name>
        <dbReference type="ChEBI" id="CHEBI:18420"/>
    </cofactor>
    <text evidence="1">Binds 1 Mg(2+) ion per subunit.</text>
</comment>
<comment type="subunit">
    <text evidence="1">Homodimer.</text>
</comment>
<comment type="similarity">
    <text evidence="1">Belongs to the HAM1 NTPase family.</text>
</comment>
<dbReference type="EC" id="3.6.1.66" evidence="1"/>
<dbReference type="EMBL" id="BX950851">
    <property type="protein sequence ID" value="CAG76529.1"/>
    <property type="molecule type" value="Genomic_DNA"/>
</dbReference>
<dbReference type="RefSeq" id="WP_011095132.1">
    <property type="nucleotide sequence ID" value="NC_004547.2"/>
</dbReference>
<dbReference type="SMR" id="Q6D117"/>
<dbReference type="STRING" id="218491.ECA3631"/>
<dbReference type="KEGG" id="eca:ECA3631"/>
<dbReference type="PATRIC" id="fig|218491.5.peg.3684"/>
<dbReference type="eggNOG" id="COG0127">
    <property type="taxonomic scope" value="Bacteria"/>
</dbReference>
<dbReference type="HOGENOM" id="CLU_082080_0_3_6"/>
<dbReference type="OrthoDB" id="9807456at2"/>
<dbReference type="Proteomes" id="UP000007966">
    <property type="component" value="Chromosome"/>
</dbReference>
<dbReference type="GO" id="GO:0005829">
    <property type="term" value="C:cytosol"/>
    <property type="evidence" value="ECO:0007669"/>
    <property type="project" value="TreeGrafter"/>
</dbReference>
<dbReference type="GO" id="GO:0035870">
    <property type="term" value="F:dITP diphosphatase activity"/>
    <property type="evidence" value="ECO:0007669"/>
    <property type="project" value="RHEA"/>
</dbReference>
<dbReference type="GO" id="GO:0036220">
    <property type="term" value="F:ITP diphosphatase activity"/>
    <property type="evidence" value="ECO:0007669"/>
    <property type="project" value="UniProtKB-EC"/>
</dbReference>
<dbReference type="GO" id="GO:0046872">
    <property type="term" value="F:metal ion binding"/>
    <property type="evidence" value="ECO:0007669"/>
    <property type="project" value="UniProtKB-KW"/>
</dbReference>
<dbReference type="GO" id="GO:0000166">
    <property type="term" value="F:nucleotide binding"/>
    <property type="evidence" value="ECO:0007669"/>
    <property type="project" value="UniProtKB-KW"/>
</dbReference>
<dbReference type="GO" id="GO:0017111">
    <property type="term" value="F:ribonucleoside triphosphate phosphatase activity"/>
    <property type="evidence" value="ECO:0007669"/>
    <property type="project" value="InterPro"/>
</dbReference>
<dbReference type="GO" id="GO:0036222">
    <property type="term" value="F:XTP diphosphatase activity"/>
    <property type="evidence" value="ECO:0007669"/>
    <property type="project" value="RHEA"/>
</dbReference>
<dbReference type="GO" id="GO:0009117">
    <property type="term" value="P:nucleotide metabolic process"/>
    <property type="evidence" value="ECO:0007669"/>
    <property type="project" value="UniProtKB-KW"/>
</dbReference>
<dbReference type="GO" id="GO:0009146">
    <property type="term" value="P:purine nucleoside triphosphate catabolic process"/>
    <property type="evidence" value="ECO:0007669"/>
    <property type="project" value="UniProtKB-UniRule"/>
</dbReference>
<dbReference type="CDD" id="cd00515">
    <property type="entry name" value="HAM1"/>
    <property type="match status" value="1"/>
</dbReference>
<dbReference type="FunFam" id="3.90.950.10:FF:000001">
    <property type="entry name" value="dITP/XTP pyrophosphatase"/>
    <property type="match status" value="1"/>
</dbReference>
<dbReference type="Gene3D" id="3.90.950.10">
    <property type="match status" value="1"/>
</dbReference>
<dbReference type="HAMAP" id="MF_01405">
    <property type="entry name" value="Non_canon_purine_NTPase"/>
    <property type="match status" value="1"/>
</dbReference>
<dbReference type="InterPro" id="IPR020922">
    <property type="entry name" value="dITP/XTP_pyrophosphatase"/>
</dbReference>
<dbReference type="InterPro" id="IPR029001">
    <property type="entry name" value="ITPase-like_fam"/>
</dbReference>
<dbReference type="InterPro" id="IPR002637">
    <property type="entry name" value="RdgB/HAM1"/>
</dbReference>
<dbReference type="NCBIfam" id="NF011397">
    <property type="entry name" value="PRK14822.1"/>
    <property type="match status" value="1"/>
</dbReference>
<dbReference type="NCBIfam" id="TIGR00042">
    <property type="entry name" value="RdgB/HAM1 family non-canonical purine NTP pyrophosphatase"/>
    <property type="match status" value="1"/>
</dbReference>
<dbReference type="PANTHER" id="PTHR11067:SF9">
    <property type="entry name" value="INOSINE TRIPHOSPHATE PYROPHOSPHATASE"/>
    <property type="match status" value="1"/>
</dbReference>
<dbReference type="PANTHER" id="PTHR11067">
    <property type="entry name" value="INOSINE TRIPHOSPHATE PYROPHOSPHATASE/HAM1 PROTEIN"/>
    <property type="match status" value="1"/>
</dbReference>
<dbReference type="Pfam" id="PF01725">
    <property type="entry name" value="Ham1p_like"/>
    <property type="match status" value="1"/>
</dbReference>
<dbReference type="SUPFAM" id="SSF52972">
    <property type="entry name" value="ITPase-like"/>
    <property type="match status" value="1"/>
</dbReference>
<gene>
    <name type="ordered locus">ECA3631</name>
</gene>
<name>IXTPA_PECAS</name>
<sequence length="197" mass="20958">MQKVVLATGNPGKVRELASLLADFGLDIVAQTELGVDSAEETGLTFIENAILKARHAAQITGLPAIADDSGLAVDALGGAPGIYSARYAGAEASDQQNLDKLLLTVKDVPDEQRRASFHCVLVYLRHAEDPTPIVCHGSWQGVLTHQSSGSGGFGYDPIFFVPELGKTAAELTREEKNAQSHRGQALRLLLDALRNA</sequence>
<protein>
    <recommendedName>
        <fullName evidence="1">dITP/XTP pyrophosphatase</fullName>
        <ecNumber evidence="1">3.6.1.66</ecNumber>
    </recommendedName>
    <alternativeName>
        <fullName evidence="1">Non-canonical purine NTP pyrophosphatase</fullName>
    </alternativeName>
    <alternativeName>
        <fullName evidence="1">Non-standard purine NTP pyrophosphatase</fullName>
    </alternativeName>
    <alternativeName>
        <fullName evidence="1">Nucleoside-triphosphate diphosphatase</fullName>
    </alternativeName>
    <alternativeName>
        <fullName evidence="1">Nucleoside-triphosphate pyrophosphatase</fullName>
        <shortName evidence="1">NTPase</shortName>
    </alternativeName>
</protein>
<reference key="1">
    <citation type="journal article" date="2004" name="Proc. Natl. Acad. Sci. U.S.A.">
        <title>Genome sequence of the enterobacterial phytopathogen Erwinia carotovora subsp. atroseptica and characterization of virulence factors.</title>
        <authorList>
            <person name="Bell K.S."/>
            <person name="Sebaihia M."/>
            <person name="Pritchard L."/>
            <person name="Holden M.T.G."/>
            <person name="Hyman L.J."/>
            <person name="Holeva M.C."/>
            <person name="Thomson N.R."/>
            <person name="Bentley S.D."/>
            <person name="Churcher L.J.C."/>
            <person name="Mungall K."/>
            <person name="Atkin R."/>
            <person name="Bason N."/>
            <person name="Brooks K."/>
            <person name="Chillingworth T."/>
            <person name="Clark K."/>
            <person name="Doggett J."/>
            <person name="Fraser A."/>
            <person name="Hance Z."/>
            <person name="Hauser H."/>
            <person name="Jagels K."/>
            <person name="Moule S."/>
            <person name="Norbertczak H."/>
            <person name="Ormond D."/>
            <person name="Price C."/>
            <person name="Quail M.A."/>
            <person name="Sanders M."/>
            <person name="Walker D."/>
            <person name="Whitehead S."/>
            <person name="Salmond G.P.C."/>
            <person name="Birch P.R.J."/>
            <person name="Parkhill J."/>
            <person name="Toth I.K."/>
        </authorList>
    </citation>
    <scope>NUCLEOTIDE SEQUENCE [LARGE SCALE GENOMIC DNA]</scope>
    <source>
        <strain>SCRI 1043 / ATCC BAA-672</strain>
    </source>
</reference>
<organism>
    <name type="scientific">Pectobacterium atrosepticum (strain SCRI 1043 / ATCC BAA-672)</name>
    <name type="common">Erwinia carotovora subsp. atroseptica</name>
    <dbReference type="NCBI Taxonomy" id="218491"/>
    <lineage>
        <taxon>Bacteria</taxon>
        <taxon>Pseudomonadati</taxon>
        <taxon>Pseudomonadota</taxon>
        <taxon>Gammaproteobacteria</taxon>
        <taxon>Enterobacterales</taxon>
        <taxon>Pectobacteriaceae</taxon>
        <taxon>Pectobacterium</taxon>
    </lineage>
</organism>
<keyword id="KW-0378">Hydrolase</keyword>
<keyword id="KW-0460">Magnesium</keyword>
<keyword id="KW-0479">Metal-binding</keyword>
<keyword id="KW-0546">Nucleotide metabolism</keyword>
<keyword id="KW-0547">Nucleotide-binding</keyword>
<keyword id="KW-1185">Reference proteome</keyword>
<feature type="chain" id="PRO_0000178167" description="dITP/XTP pyrophosphatase">
    <location>
        <begin position="1"/>
        <end position="197"/>
    </location>
</feature>
<feature type="active site" description="Proton acceptor" evidence="1">
    <location>
        <position position="69"/>
    </location>
</feature>
<feature type="binding site" evidence="1">
    <location>
        <begin position="8"/>
        <end position="13"/>
    </location>
    <ligand>
        <name>substrate</name>
    </ligand>
</feature>
<feature type="binding site" evidence="1">
    <location>
        <position position="40"/>
    </location>
    <ligand>
        <name>Mg(2+)</name>
        <dbReference type="ChEBI" id="CHEBI:18420"/>
    </ligand>
</feature>
<feature type="binding site" evidence="1">
    <location>
        <position position="69"/>
    </location>
    <ligand>
        <name>Mg(2+)</name>
        <dbReference type="ChEBI" id="CHEBI:18420"/>
    </ligand>
</feature>
<feature type="binding site" evidence="1">
    <location>
        <position position="70"/>
    </location>
    <ligand>
        <name>substrate</name>
    </ligand>
</feature>
<feature type="binding site" evidence="1">
    <location>
        <begin position="154"/>
        <end position="157"/>
    </location>
    <ligand>
        <name>substrate</name>
    </ligand>
</feature>
<feature type="binding site" evidence="1">
    <location>
        <position position="177"/>
    </location>
    <ligand>
        <name>substrate</name>
    </ligand>
</feature>
<feature type="binding site" evidence="1">
    <location>
        <begin position="182"/>
        <end position="183"/>
    </location>
    <ligand>
        <name>substrate</name>
    </ligand>
</feature>
<evidence type="ECO:0000255" key="1">
    <source>
        <dbReference type="HAMAP-Rule" id="MF_01405"/>
    </source>
</evidence>